<proteinExistence type="inferred from homology"/>
<accession>A1BEP5</accession>
<sequence>MTSYSLPFKSSGKEMAASGELAGKIGLLKKEMNAIVLAHYYTLPEIQQVADVVGDSLALARAAEKNSADVIVFAGVYFMAETAKIINPDKLVLMPDLYAGCPLADSCPVGEFRAFKQRHPDALVITYINSTAEIKSLSDITCTSSNAEHIIRQIPEERTIIFGPDRNLGGYIMKKLGREMLLWQGFCYVHEAFREACILQACRENPQAELIAHPECREEVLRHAAFIGSTQALLDYTVSAPASSFIVATEPGILYEMQRRSPKKQFIAAPKDPENPRSVCKQMKQNTLEKLYQCMLDRSPEIIVPDDLRVLALRPIKKMLEMS</sequence>
<gene>
    <name evidence="1" type="primary">nadA</name>
    <name type="ordered locus">Cpha266_0821</name>
</gene>
<reference key="1">
    <citation type="submission" date="2006-12" db="EMBL/GenBank/DDBJ databases">
        <title>Complete sequence of Chlorobium phaeobacteroides DSM 266.</title>
        <authorList>
            <consortium name="US DOE Joint Genome Institute"/>
            <person name="Copeland A."/>
            <person name="Lucas S."/>
            <person name="Lapidus A."/>
            <person name="Barry K."/>
            <person name="Detter J.C."/>
            <person name="Glavina del Rio T."/>
            <person name="Hammon N."/>
            <person name="Israni S."/>
            <person name="Pitluck S."/>
            <person name="Goltsman E."/>
            <person name="Schmutz J."/>
            <person name="Larimer F."/>
            <person name="Land M."/>
            <person name="Hauser L."/>
            <person name="Mikhailova N."/>
            <person name="Li T."/>
            <person name="Overmann J."/>
            <person name="Bryant D.A."/>
            <person name="Richardson P."/>
        </authorList>
    </citation>
    <scope>NUCLEOTIDE SEQUENCE [LARGE SCALE GENOMIC DNA]</scope>
    <source>
        <strain>DSM 266 / SMG 266 / 2430</strain>
    </source>
</reference>
<comment type="function">
    <text evidence="1">Catalyzes the condensation of iminoaspartate with dihydroxyacetone phosphate to form quinolinate.</text>
</comment>
<comment type="catalytic activity">
    <reaction evidence="1">
        <text>iminosuccinate + dihydroxyacetone phosphate = quinolinate + phosphate + 2 H2O + H(+)</text>
        <dbReference type="Rhea" id="RHEA:25888"/>
        <dbReference type="ChEBI" id="CHEBI:15377"/>
        <dbReference type="ChEBI" id="CHEBI:15378"/>
        <dbReference type="ChEBI" id="CHEBI:29959"/>
        <dbReference type="ChEBI" id="CHEBI:43474"/>
        <dbReference type="ChEBI" id="CHEBI:57642"/>
        <dbReference type="ChEBI" id="CHEBI:77875"/>
        <dbReference type="EC" id="2.5.1.72"/>
    </reaction>
    <physiologicalReaction direction="left-to-right" evidence="1">
        <dbReference type="Rhea" id="RHEA:25889"/>
    </physiologicalReaction>
</comment>
<comment type="cofactor">
    <cofactor evidence="1">
        <name>[4Fe-4S] cluster</name>
        <dbReference type="ChEBI" id="CHEBI:49883"/>
    </cofactor>
    <text evidence="1">Binds 1 [4Fe-4S] cluster per subunit.</text>
</comment>
<comment type="pathway">
    <text evidence="1">Cofactor biosynthesis; NAD(+) biosynthesis; quinolinate from iminoaspartate: step 1/1.</text>
</comment>
<comment type="subcellular location">
    <subcellularLocation>
        <location evidence="1">Cytoplasm</location>
    </subcellularLocation>
</comment>
<comment type="similarity">
    <text evidence="1">Belongs to the quinolinate synthase family. Type 2 subfamily.</text>
</comment>
<protein>
    <recommendedName>
        <fullName evidence="1">Quinolinate synthase</fullName>
        <ecNumber evidence="1">2.5.1.72</ecNumber>
    </recommendedName>
</protein>
<dbReference type="EC" id="2.5.1.72" evidence="1"/>
<dbReference type="EMBL" id="CP000492">
    <property type="protein sequence ID" value="ABL64872.1"/>
    <property type="molecule type" value="Genomic_DNA"/>
</dbReference>
<dbReference type="SMR" id="A1BEP5"/>
<dbReference type="STRING" id="290317.Cpha266_0821"/>
<dbReference type="KEGG" id="cph:Cpha266_0821"/>
<dbReference type="eggNOG" id="COG0379">
    <property type="taxonomic scope" value="Bacteria"/>
</dbReference>
<dbReference type="HOGENOM" id="CLU_047382_0_0_10"/>
<dbReference type="OrthoDB" id="9801204at2"/>
<dbReference type="UniPathway" id="UPA00253">
    <property type="reaction ID" value="UER00327"/>
</dbReference>
<dbReference type="Proteomes" id="UP000008701">
    <property type="component" value="Chromosome"/>
</dbReference>
<dbReference type="GO" id="GO:0005829">
    <property type="term" value="C:cytosol"/>
    <property type="evidence" value="ECO:0007669"/>
    <property type="project" value="TreeGrafter"/>
</dbReference>
<dbReference type="GO" id="GO:0051539">
    <property type="term" value="F:4 iron, 4 sulfur cluster binding"/>
    <property type="evidence" value="ECO:0007669"/>
    <property type="project" value="UniProtKB-KW"/>
</dbReference>
<dbReference type="GO" id="GO:0046872">
    <property type="term" value="F:metal ion binding"/>
    <property type="evidence" value="ECO:0007669"/>
    <property type="project" value="UniProtKB-KW"/>
</dbReference>
<dbReference type="GO" id="GO:0008987">
    <property type="term" value="F:quinolinate synthetase A activity"/>
    <property type="evidence" value="ECO:0007669"/>
    <property type="project" value="UniProtKB-UniRule"/>
</dbReference>
<dbReference type="GO" id="GO:0034628">
    <property type="term" value="P:'de novo' NAD biosynthetic process from L-aspartate"/>
    <property type="evidence" value="ECO:0007669"/>
    <property type="project" value="TreeGrafter"/>
</dbReference>
<dbReference type="FunFam" id="3.40.50.10800:FF:000003">
    <property type="entry name" value="Quinolinate synthase A"/>
    <property type="match status" value="1"/>
</dbReference>
<dbReference type="Gene3D" id="3.40.50.10800">
    <property type="entry name" value="NadA-like"/>
    <property type="match status" value="3"/>
</dbReference>
<dbReference type="HAMAP" id="MF_00568">
    <property type="entry name" value="NadA_type2"/>
    <property type="match status" value="1"/>
</dbReference>
<dbReference type="InterPro" id="IPR003473">
    <property type="entry name" value="NadA"/>
</dbReference>
<dbReference type="InterPro" id="IPR036094">
    <property type="entry name" value="NadA_sf"/>
</dbReference>
<dbReference type="InterPro" id="IPR023066">
    <property type="entry name" value="Quinolinate_synth_type2"/>
</dbReference>
<dbReference type="NCBIfam" id="TIGR00550">
    <property type="entry name" value="nadA"/>
    <property type="match status" value="1"/>
</dbReference>
<dbReference type="NCBIfam" id="NF006878">
    <property type="entry name" value="PRK09375.1-2"/>
    <property type="match status" value="1"/>
</dbReference>
<dbReference type="PANTHER" id="PTHR30573:SF0">
    <property type="entry name" value="QUINOLINATE SYNTHASE, CHLOROPLASTIC"/>
    <property type="match status" value="1"/>
</dbReference>
<dbReference type="PANTHER" id="PTHR30573">
    <property type="entry name" value="QUINOLINATE SYNTHETASE A"/>
    <property type="match status" value="1"/>
</dbReference>
<dbReference type="Pfam" id="PF02445">
    <property type="entry name" value="NadA"/>
    <property type="match status" value="1"/>
</dbReference>
<dbReference type="SUPFAM" id="SSF142754">
    <property type="entry name" value="NadA-like"/>
    <property type="match status" value="1"/>
</dbReference>
<keyword id="KW-0004">4Fe-4S</keyword>
<keyword id="KW-0963">Cytoplasm</keyword>
<keyword id="KW-0408">Iron</keyword>
<keyword id="KW-0411">Iron-sulfur</keyword>
<keyword id="KW-0479">Metal-binding</keyword>
<keyword id="KW-0662">Pyridine nucleotide biosynthesis</keyword>
<keyword id="KW-1185">Reference proteome</keyword>
<keyword id="KW-0808">Transferase</keyword>
<evidence type="ECO:0000255" key="1">
    <source>
        <dbReference type="HAMAP-Rule" id="MF_00568"/>
    </source>
</evidence>
<organism>
    <name type="scientific">Chlorobium phaeobacteroides (strain DSM 266 / SMG 266 / 2430)</name>
    <dbReference type="NCBI Taxonomy" id="290317"/>
    <lineage>
        <taxon>Bacteria</taxon>
        <taxon>Pseudomonadati</taxon>
        <taxon>Chlorobiota</taxon>
        <taxon>Chlorobiia</taxon>
        <taxon>Chlorobiales</taxon>
        <taxon>Chlorobiaceae</taxon>
        <taxon>Chlorobium/Pelodictyon group</taxon>
        <taxon>Chlorobium</taxon>
    </lineage>
</organism>
<feature type="chain" id="PRO_1000061149" description="Quinolinate synthase">
    <location>
        <begin position="1"/>
        <end position="323"/>
    </location>
</feature>
<feature type="binding site" evidence="1">
    <location>
        <position position="39"/>
    </location>
    <ligand>
        <name>iminosuccinate</name>
        <dbReference type="ChEBI" id="CHEBI:77875"/>
    </ligand>
</feature>
<feature type="binding site" evidence="1">
    <location>
        <position position="56"/>
    </location>
    <ligand>
        <name>iminosuccinate</name>
        <dbReference type="ChEBI" id="CHEBI:77875"/>
    </ligand>
</feature>
<feature type="binding site" evidence="1">
    <location>
        <position position="101"/>
    </location>
    <ligand>
        <name>[4Fe-4S] cluster</name>
        <dbReference type="ChEBI" id="CHEBI:49883"/>
    </ligand>
</feature>
<feature type="binding site" evidence="1">
    <location>
        <begin position="127"/>
        <end position="129"/>
    </location>
    <ligand>
        <name>iminosuccinate</name>
        <dbReference type="ChEBI" id="CHEBI:77875"/>
    </ligand>
</feature>
<feature type="binding site" evidence="1">
    <location>
        <position position="144"/>
    </location>
    <ligand>
        <name>iminosuccinate</name>
        <dbReference type="ChEBI" id="CHEBI:77875"/>
    </ligand>
</feature>
<feature type="binding site" evidence="1">
    <location>
        <position position="187"/>
    </location>
    <ligand>
        <name>[4Fe-4S] cluster</name>
        <dbReference type="ChEBI" id="CHEBI:49883"/>
    </ligand>
</feature>
<feature type="binding site" evidence="1">
    <location>
        <begin position="213"/>
        <end position="215"/>
    </location>
    <ligand>
        <name>iminosuccinate</name>
        <dbReference type="ChEBI" id="CHEBI:77875"/>
    </ligand>
</feature>
<feature type="binding site" evidence="1">
    <location>
        <position position="230"/>
    </location>
    <ligand>
        <name>iminosuccinate</name>
        <dbReference type="ChEBI" id="CHEBI:77875"/>
    </ligand>
</feature>
<feature type="binding site" evidence="1">
    <location>
        <position position="280"/>
    </location>
    <ligand>
        <name>[4Fe-4S] cluster</name>
        <dbReference type="ChEBI" id="CHEBI:49883"/>
    </ligand>
</feature>
<name>NADA_CHLPD</name>